<reference key="1">
    <citation type="journal article" date="1998" name="Cancer Res.">
        <title>Isolation and characterization of a novel human lung-specific gene homologous to lysosomal membrane glycoprotein 1 and 2; significantly increased expression in cancers of various tissues.</title>
        <authorList>
            <person name="Ozaki K."/>
            <person name="Nagata M."/>
            <person name="Suzuki M."/>
            <person name="Fujiwara T."/>
            <person name="Ueda K."/>
            <person name="Miyoshi Y."/>
            <person name="Takahashi E."/>
            <person name="Nakamura Y."/>
        </authorList>
    </citation>
    <scope>NUCLEOTIDE SEQUENCE [MRNA]</scope>
    <scope>TISSUE SPECIFICITY</scope>
    <scope>VARIANT VAL-318</scope>
    <source>
        <tissue>Lung</tissue>
    </source>
</reference>
<reference key="2">
    <citation type="journal article" date="1998" name="Immunity">
        <title>A novel lysosome-associated membrane glycoprotein, DC-LAMP, induced upon DC maturation, is transiently expressed in MHC class II compartment.</title>
        <authorList>
            <person name="de Saint-Vis B.M."/>
            <person name="Vincent J."/>
            <person name="Vandenabeele S."/>
            <person name="Vanbervliet B."/>
            <person name="Pin J.J."/>
            <person name="Ait-Yahia S."/>
            <person name="Patel S."/>
            <person name="Mattei M.-G."/>
            <person name="Banchereau J."/>
            <person name="Zurawski S."/>
            <person name="Davoust J."/>
            <person name="Caux C."/>
            <person name="Lebecque S."/>
        </authorList>
    </citation>
    <scope>NUCLEOTIDE SEQUENCE [MRNA]</scope>
    <scope>FUNCTION</scope>
    <scope>SUBCELLULAR LOCATION</scope>
    <scope>TISSUE SPECIFICITY</scope>
</reference>
<reference key="3">
    <citation type="submission" date="2005-09" db="EMBL/GenBank/DDBJ databases">
        <authorList>
            <person name="Mural R.J."/>
            <person name="Istrail S."/>
            <person name="Sutton G.G."/>
            <person name="Florea L."/>
            <person name="Halpern A.L."/>
            <person name="Mobarry C.M."/>
            <person name="Lippert R."/>
            <person name="Walenz B."/>
            <person name="Shatkay H."/>
            <person name="Dew I."/>
            <person name="Miller J.R."/>
            <person name="Flanigan M.J."/>
            <person name="Edwards N.J."/>
            <person name="Bolanos R."/>
            <person name="Fasulo D."/>
            <person name="Halldorsson B.V."/>
            <person name="Hannenhalli S."/>
            <person name="Turner R."/>
            <person name="Yooseph S."/>
            <person name="Lu F."/>
            <person name="Nusskern D.R."/>
            <person name="Shue B.C."/>
            <person name="Zheng X.H."/>
            <person name="Zhong F."/>
            <person name="Delcher A.L."/>
            <person name="Huson D.H."/>
            <person name="Kravitz S.A."/>
            <person name="Mouchard L."/>
            <person name="Reinert K."/>
            <person name="Remington K.A."/>
            <person name="Clark A.G."/>
            <person name="Waterman M.S."/>
            <person name="Eichler E.E."/>
            <person name="Adams M.D."/>
            <person name="Hunkapiller M.W."/>
            <person name="Myers E.W."/>
            <person name="Venter J.C."/>
        </authorList>
    </citation>
    <scope>NUCLEOTIDE SEQUENCE [LARGE SCALE GENOMIC DNA]</scope>
    <scope>VARIANT VAL-318</scope>
</reference>
<reference key="4">
    <citation type="journal article" date="2004" name="Genome Res.">
        <title>The status, quality, and expansion of the NIH full-length cDNA project: the Mammalian Gene Collection (MGC).</title>
        <authorList>
            <consortium name="The MGC Project Team"/>
        </authorList>
    </citation>
    <scope>NUCLEOTIDE SEQUENCE [LARGE SCALE MRNA]</scope>
    <scope>VARIANT GLY-32</scope>
    <source>
        <tissue>Testis</tissue>
    </source>
</reference>
<reference key="5">
    <citation type="journal article" date="2011" name="J. Immunol.">
        <title>Reciprocal polarization of T and B cells at the immunological synapse.</title>
        <authorList>
            <person name="Duchez S."/>
            <person name="Rodrigues M."/>
            <person name="Bertrand F."/>
            <person name="Valitutti S."/>
        </authorList>
    </citation>
    <scope>SUBCELLULAR LOCATION</scope>
    <scope>TISSUE SPECIFICITY</scope>
</reference>
<reference key="6">
    <citation type="journal article" date="2011" name="Virol. J.">
        <title>Lysosome-associated membrane glycoprotein 3 is involved in influenza A virus replication in human lung epithelial (A549) cells.</title>
        <authorList>
            <person name="Zhou Z."/>
            <person name="Xue Q."/>
            <person name="Wan Y."/>
            <person name="Yang Y."/>
            <person name="Wang J."/>
            <person name="Hung T."/>
        </authorList>
    </citation>
    <scope>FUNCTION (MICROBIAL INFECTION)</scope>
    <scope>SUBCELLULAR LOCATION</scope>
</reference>
<reference key="7">
    <citation type="journal article" date="2014" name="Endocr. Relat. Cancer">
        <title>LAMP3 is involved in tamoxifen resistance in breast cancer cells through the modulation of autophagy.</title>
        <authorList>
            <person name="Nagelkerke A."/>
            <person name="Sieuwerts A.M."/>
            <person name="Bussink J."/>
            <person name="Sweep F.C."/>
            <person name="Look M.P."/>
            <person name="Foekens J.A."/>
            <person name="Martens J.W."/>
            <person name="Span P.N."/>
        </authorList>
    </citation>
    <scope>FUNCTION</scope>
</reference>
<reference key="8">
    <citation type="journal article" date="2015" name="Eur. J. Cell Biol.">
        <title>Loss of lysosome-associated membrane protein 3 (LAMP3) enhances cellular vulnerability against proteasomal inhibition.</title>
        <authorList>
            <person name="Dominguez-Bautista J.A."/>
            <person name="Klinkenberg M."/>
            <person name="Brehm N."/>
            <person name="Subramaniam M."/>
            <person name="Kern B."/>
            <person name="Roeper J."/>
            <person name="Auburger G."/>
            <person name="Jendrach M."/>
        </authorList>
    </citation>
    <scope>FUNCTION</scope>
    <scope>SUBCELLULAR LOCATION</scope>
    <scope>INDUCTION BY ATF4</scope>
</reference>
<reference key="9">
    <citation type="journal article" date="2016" name="Mol. Cells">
        <title>LAMP-3 (Lysosome-Associated Membrane Protein 3) Promotes the Intracellular Proliferation of Salmonella typhimurium.</title>
        <authorList>
            <person name="Lee E.J."/>
            <person name="Park K.S."/>
            <person name="Jeon I.S."/>
            <person name="Choi J.W."/>
            <person name="Lee S.J."/>
            <person name="Choy H.E."/>
            <person name="Song K.D."/>
            <person name="Lee H.K."/>
            <person name="Choi J.K."/>
        </authorList>
    </citation>
    <scope>FUNCTION (MICROBIAL INFECTION)</scope>
    <scope>INDUCTION BY SALMONELLA (MICROBIAL INFECTION)</scope>
    <scope>SUBCELLULAR LOCATION</scope>
</reference>
<reference key="10">
    <citation type="journal article" date="2018" name="Mol. Cell. Endocrinol.">
        <title>LAMP3 regulates hepatic lipid metabolism through activating PI3K/Akt pathway.</title>
        <authorList>
            <person name="Liao X."/>
            <person name="Song L."/>
            <person name="Zhang L."/>
            <person name="Wang H."/>
            <person name="Tong Q."/>
            <person name="Xu J."/>
            <person name="Yang G."/>
            <person name="Yang S."/>
            <person name="Zheng H."/>
        </authorList>
    </citation>
    <scope>FUNCTION</scope>
</reference>
<reference key="11">
    <citation type="journal article" date="2020" name="J. Virol.">
        <title>Lysosome-Associated Membrane Proteins Support the Furin-Mediated Processing of the Mumps Virus Fusion Protein.</title>
        <authorList>
            <person name="Ueo A."/>
            <person name="Kubota M."/>
            <person name="Shirogane Y."/>
            <person name="Ohno S."/>
            <person name="Hashiguchi T."/>
            <person name="Yanagi Y."/>
        </authorList>
    </citation>
    <scope>FUNCTION (MICROBIAL INFECTION)</scope>
    <scope>INTERACTION WITH FURIN</scope>
    <scope>INTERACTION WITH MUMPS VIRURS PROTEIN F (MICROBIAL INFECTION)</scope>
</reference>
<reference key="12">
    <citation type="journal article" date="2012" name="BMC Biol.">
        <title>Crystal structure of the conserved domain of the DC lysosomal associated membrane protein: implications for the lysosomal glycocalyx.</title>
        <authorList>
            <person name="Wilke S."/>
            <person name="Krausze J."/>
            <person name="Bussow K."/>
        </authorList>
    </citation>
    <scope>X-RAY CRYSTALLOGRAPHY (2.69 ANGSTROMS) OF 222-381</scope>
    <scope>SUBUNIT</scope>
    <scope>GLYCOSYLATION AT ASN-291</scope>
    <scope>DISULFIDE BONDS</scope>
</reference>
<organism>
    <name type="scientific">Homo sapiens</name>
    <name type="common">Human</name>
    <dbReference type="NCBI Taxonomy" id="9606"/>
    <lineage>
        <taxon>Eukaryota</taxon>
        <taxon>Metazoa</taxon>
        <taxon>Chordata</taxon>
        <taxon>Craniata</taxon>
        <taxon>Vertebrata</taxon>
        <taxon>Euteleostomi</taxon>
        <taxon>Mammalia</taxon>
        <taxon>Eutheria</taxon>
        <taxon>Euarchontoglires</taxon>
        <taxon>Primates</taxon>
        <taxon>Haplorrhini</taxon>
        <taxon>Catarrhini</taxon>
        <taxon>Hominidae</taxon>
        <taxon>Homo</taxon>
    </lineage>
</organism>
<gene>
    <name type="primary">LAMP3</name>
    <name type="synonym">DCLAMP</name>
    <name type="synonym">TSC403</name>
</gene>
<comment type="function">
    <text evidence="8 9 11 14">Lysosomal membrane glycoprotein which plays a role in the unfolded protein response (UPR) that contributes to protein degradation and cell survival during proteasomal dysfunction (PubMed:25681212). Plays a role in the process of fusion of the lysosome with the autophagosome, thereby modulating the autophagic process (PubMed:24434718). Promotes hepatocellular lipogenesis through activation of the PI3K/Akt pathway (PubMed:29056532). May also play a role in dendritic cell function and in adaptive immunity (PubMed:9768752).</text>
</comment>
<comment type="function">
    <text evidence="5">(Microbial infection) Plays a positive role in post-entry steps of influenza A virus replication, either virus uncoating, cytosolic transport, or nuclear import of viral components, and promotes nuclear accumulation of influenza nucleoprotein/NP at early stages of viral infection.</text>
</comment>
<comment type="function">
    <text evidence="12">(Microbial infection) Supports the FURIN-mediated cleavage of mumps virus fusion protein F by interacting with both FURIN and the unprocessed form but not the processed form of the viral protein F.</text>
</comment>
<comment type="function">
    <text evidence="10">(Microbial infection) Promotes the intracellular proliferation of Salmonella typhimuium.</text>
</comment>
<comment type="subunit">
    <text evidence="7 12">Monomer (PubMed:22809326). Interacts with FURIN (PubMed:32295904).</text>
</comment>
<comment type="subunit">
    <text evidence="12">(Microbial infection) Interacts with mumps virus protein F; this interaction promotes protein F cleavage by FURIN.</text>
</comment>
<comment type="subcellular location">
    <subcellularLocation>
        <location evidence="10">Cell surface</location>
    </subcellularLocation>
    <subcellularLocation>
        <location evidence="6 14">Lysosome membrane</location>
        <topology evidence="1">Single-pass type I membrane protein</topology>
    </subcellularLocation>
    <subcellularLocation>
        <location evidence="14">Cytoplasmic vesicle membrane</location>
        <topology evidence="1">Single-pass type I membrane protein</topology>
    </subcellularLocation>
    <subcellularLocation>
        <location evidence="5">Early endosome membrane</location>
        <topology evidence="1">Single-pass type I membrane protein</topology>
    </subcellularLocation>
    <text evidence="14">During dendritic cell maturation, detected on cytoplasmic vesicles (the MHC II compartment) that contain MHC II proteins, LAMP1, LAMP2 and LAMP3 (PubMed:9768752). Detected on lysosomes in mature dendritic cells (PubMed:9768752).</text>
</comment>
<comment type="tissue specificity">
    <text evidence="6 13 14">Detected in tonsil interdigitating dendritic cells, in spleen, lymph node, Peyer's patches in the small instestine, in thymus medulla and in B-cells (at protein level). Expressed in lymphoid organs and dendritic cells. Expressed in lung. Up-regulated in carcinomas of the esophagus, colon, rectum, ureter, stomach, breast, fallopian tube, thyroid and parotid tissues.</text>
</comment>
<comment type="developmental stage">
    <text>Up-regulated during dendritic cell maturation.</text>
</comment>
<comment type="induction">
    <text evidence="9">By UPR transcription factor ATF4 signaling.</text>
</comment>
<comment type="induction">
    <text evidence="10">(Microbial infection) Upon Salmonella typhimurium infection, at both transcriptional and translational levels.</text>
</comment>
<comment type="similarity">
    <text evidence="2">Belongs to the LAMP family.</text>
</comment>
<dbReference type="EMBL" id="AB013924">
    <property type="protein sequence ID" value="BAA34533.1"/>
    <property type="molecule type" value="mRNA"/>
</dbReference>
<dbReference type="EMBL" id="AJ005766">
    <property type="protein sequence ID" value="CAA06691.1"/>
    <property type="molecule type" value="mRNA"/>
</dbReference>
<dbReference type="EMBL" id="CH471052">
    <property type="protein sequence ID" value="EAW78337.1"/>
    <property type="molecule type" value="Genomic_DNA"/>
</dbReference>
<dbReference type="EMBL" id="CH471052">
    <property type="protein sequence ID" value="EAW78338.1"/>
    <property type="molecule type" value="Genomic_DNA"/>
</dbReference>
<dbReference type="EMBL" id="BC032940">
    <property type="protein sequence ID" value="AAH32940.1"/>
    <property type="molecule type" value="mRNA"/>
</dbReference>
<dbReference type="CCDS" id="CCDS3242.1"/>
<dbReference type="RefSeq" id="NP_055213.2">
    <property type="nucleotide sequence ID" value="NM_014398.3"/>
</dbReference>
<dbReference type="PDB" id="4AKM">
    <property type="method" value="X-ray"/>
    <property type="resolution" value="2.69 A"/>
    <property type="chains" value="A/B=222-381"/>
</dbReference>
<dbReference type="PDBsum" id="4AKM"/>
<dbReference type="SMR" id="Q9UQV4"/>
<dbReference type="BioGRID" id="117983">
    <property type="interactions" value="493"/>
</dbReference>
<dbReference type="FunCoup" id="Q9UQV4">
    <property type="interactions" value="464"/>
</dbReference>
<dbReference type="IntAct" id="Q9UQV4">
    <property type="interactions" value="95"/>
</dbReference>
<dbReference type="MINT" id="Q9UQV4"/>
<dbReference type="STRING" id="9606.ENSP00000265598"/>
<dbReference type="TCDB" id="9.A.16.1.9">
    <property type="family name" value="the lysosomal protein import (lpi) family"/>
</dbReference>
<dbReference type="GlyCosmos" id="Q9UQV4">
    <property type="glycosylation" value="8 sites, 2 glycans"/>
</dbReference>
<dbReference type="GlyGen" id="Q9UQV4">
    <property type="glycosylation" value="10 sites, 2 N-linked glycans (3 sites), 4 O-linked glycans (2 sites)"/>
</dbReference>
<dbReference type="iPTMnet" id="Q9UQV4"/>
<dbReference type="PhosphoSitePlus" id="Q9UQV4"/>
<dbReference type="SwissPalm" id="Q9UQV4"/>
<dbReference type="BioMuta" id="LAMP3"/>
<dbReference type="DMDM" id="126302564"/>
<dbReference type="jPOST" id="Q9UQV4"/>
<dbReference type="MassIVE" id="Q9UQV4"/>
<dbReference type="PaxDb" id="9606-ENSP00000265598"/>
<dbReference type="PeptideAtlas" id="Q9UQV4"/>
<dbReference type="ProteomicsDB" id="85575"/>
<dbReference type="Antibodypedia" id="33770">
    <property type="antibodies" value="574 antibodies from 39 providers"/>
</dbReference>
<dbReference type="DNASU" id="27074"/>
<dbReference type="Ensembl" id="ENST00000265598.8">
    <property type="protein sequence ID" value="ENSP00000265598.3"/>
    <property type="gene ID" value="ENSG00000078081.8"/>
</dbReference>
<dbReference type="GeneID" id="27074"/>
<dbReference type="KEGG" id="hsa:27074"/>
<dbReference type="MANE-Select" id="ENST00000265598.8">
    <property type="protein sequence ID" value="ENSP00000265598.3"/>
    <property type="RefSeq nucleotide sequence ID" value="NM_014398.4"/>
    <property type="RefSeq protein sequence ID" value="NP_055213.2"/>
</dbReference>
<dbReference type="UCSC" id="uc003flh.5">
    <property type="organism name" value="human"/>
</dbReference>
<dbReference type="AGR" id="HGNC:14582"/>
<dbReference type="CTD" id="27074"/>
<dbReference type="DisGeNET" id="27074"/>
<dbReference type="GeneCards" id="LAMP3"/>
<dbReference type="HGNC" id="HGNC:14582">
    <property type="gene designation" value="LAMP3"/>
</dbReference>
<dbReference type="HPA" id="ENSG00000078081">
    <property type="expression patterns" value="Tissue enriched (lung)"/>
</dbReference>
<dbReference type="MIM" id="605883">
    <property type="type" value="gene"/>
</dbReference>
<dbReference type="neXtProt" id="NX_Q9UQV4"/>
<dbReference type="OpenTargets" id="ENSG00000078081"/>
<dbReference type="PharmGKB" id="PA30286"/>
<dbReference type="VEuPathDB" id="HostDB:ENSG00000078081"/>
<dbReference type="eggNOG" id="KOG4818">
    <property type="taxonomic scope" value="Eukaryota"/>
</dbReference>
<dbReference type="GeneTree" id="ENSGT00940000164015"/>
<dbReference type="InParanoid" id="Q9UQV4"/>
<dbReference type="OMA" id="QLLFVNM"/>
<dbReference type="OrthoDB" id="9428839at2759"/>
<dbReference type="PAN-GO" id="Q9UQV4">
    <property type="GO annotations" value="4 GO annotations based on evolutionary models"/>
</dbReference>
<dbReference type="PhylomeDB" id="Q9UQV4"/>
<dbReference type="TreeFam" id="TF316339"/>
<dbReference type="PathwayCommons" id="Q9UQV4"/>
<dbReference type="SignaLink" id="Q9UQV4"/>
<dbReference type="BioGRID-ORCS" id="27074">
    <property type="hits" value="9 hits in 1156 CRISPR screens"/>
</dbReference>
<dbReference type="ChiTaRS" id="LAMP3">
    <property type="organism name" value="human"/>
</dbReference>
<dbReference type="EvolutionaryTrace" id="Q9UQV4"/>
<dbReference type="GeneWiki" id="LAMP3"/>
<dbReference type="GenomeRNAi" id="27074"/>
<dbReference type="Pharos" id="Q9UQV4">
    <property type="development level" value="Tbio"/>
</dbReference>
<dbReference type="PRO" id="PR:Q9UQV4"/>
<dbReference type="Proteomes" id="UP000005640">
    <property type="component" value="Chromosome 3"/>
</dbReference>
<dbReference type="RNAct" id="Q9UQV4">
    <property type="molecule type" value="protein"/>
</dbReference>
<dbReference type="Bgee" id="ENSG00000078081">
    <property type="expression patterns" value="Expressed in lower lobe of lung and 137 other cell types or tissues"/>
</dbReference>
<dbReference type="ExpressionAtlas" id="Q9UQV4">
    <property type="expression patterns" value="baseline and differential"/>
</dbReference>
<dbReference type="GO" id="GO:0097233">
    <property type="term" value="C:alveolar lamellar body membrane"/>
    <property type="evidence" value="ECO:0000250"/>
    <property type="project" value="ParkinsonsUK-UCL"/>
</dbReference>
<dbReference type="GO" id="GO:0009986">
    <property type="term" value="C:cell surface"/>
    <property type="evidence" value="ECO:0007669"/>
    <property type="project" value="UniProtKB-SubCell"/>
</dbReference>
<dbReference type="GO" id="GO:0005769">
    <property type="term" value="C:early endosome"/>
    <property type="evidence" value="ECO:0000314"/>
    <property type="project" value="ParkinsonsUK-UCL"/>
</dbReference>
<dbReference type="GO" id="GO:0031901">
    <property type="term" value="C:early endosome membrane"/>
    <property type="evidence" value="ECO:0007669"/>
    <property type="project" value="UniProtKB-SubCell"/>
</dbReference>
<dbReference type="GO" id="GO:0043231">
    <property type="term" value="C:intracellular membrane-bounded organelle"/>
    <property type="evidence" value="ECO:0000314"/>
    <property type="project" value="HPA"/>
</dbReference>
<dbReference type="GO" id="GO:0031902">
    <property type="term" value="C:late endosome membrane"/>
    <property type="evidence" value="ECO:0000318"/>
    <property type="project" value="GO_Central"/>
</dbReference>
<dbReference type="GO" id="GO:0005765">
    <property type="term" value="C:lysosomal membrane"/>
    <property type="evidence" value="ECO:0000318"/>
    <property type="project" value="GO_Central"/>
</dbReference>
<dbReference type="GO" id="GO:0048471">
    <property type="term" value="C:perinuclear region of cytoplasm"/>
    <property type="evidence" value="ECO:0000314"/>
    <property type="project" value="ParkinsonsUK-UCL"/>
</dbReference>
<dbReference type="GO" id="GO:0005886">
    <property type="term" value="C:plasma membrane"/>
    <property type="evidence" value="ECO:0000314"/>
    <property type="project" value="ParkinsonsUK-UCL"/>
</dbReference>
<dbReference type="GO" id="GO:0031982">
    <property type="term" value="C:vesicle"/>
    <property type="evidence" value="ECO:0000314"/>
    <property type="project" value="ParkinsonsUK-UCL"/>
</dbReference>
<dbReference type="GO" id="GO:0002250">
    <property type="term" value="P:adaptive immune response"/>
    <property type="evidence" value="ECO:0007669"/>
    <property type="project" value="UniProtKB-KW"/>
</dbReference>
<dbReference type="GO" id="GO:0072594">
    <property type="term" value="P:establishment of protein localization to organelle"/>
    <property type="evidence" value="ECO:0000318"/>
    <property type="project" value="GO_Central"/>
</dbReference>
<dbReference type="GO" id="GO:1901799">
    <property type="term" value="P:negative regulation of proteasomal protein catabolic process"/>
    <property type="evidence" value="ECO:0000315"/>
    <property type="project" value="ParkinsonsUK-UCL"/>
</dbReference>
<dbReference type="GO" id="GO:0010628">
    <property type="term" value="P:positive regulation of gene expression"/>
    <property type="evidence" value="ECO:0000315"/>
    <property type="project" value="ParkinsonsUK-UCL"/>
</dbReference>
<dbReference type="GO" id="GO:0010506">
    <property type="term" value="P:regulation of autophagy"/>
    <property type="evidence" value="ECO:0000315"/>
    <property type="project" value="ParkinsonsUK-UCL"/>
</dbReference>
<dbReference type="GO" id="GO:1903900">
    <property type="term" value="P:regulation of viral life cycle"/>
    <property type="evidence" value="ECO:0000315"/>
    <property type="project" value="ParkinsonsUK-UCL"/>
</dbReference>
<dbReference type="GO" id="GO:0035455">
    <property type="term" value="P:response to interferon-alpha"/>
    <property type="evidence" value="ECO:0000315"/>
    <property type="project" value="ParkinsonsUK-UCL"/>
</dbReference>
<dbReference type="FunFam" id="2.40.160.110:FF:000006">
    <property type="entry name" value="Lysosome-associated membrane glycoprotein 3"/>
    <property type="match status" value="1"/>
</dbReference>
<dbReference type="Gene3D" id="2.40.160.110">
    <property type="match status" value="1"/>
</dbReference>
<dbReference type="InterPro" id="IPR048528">
    <property type="entry name" value="Lamp2-like_luminal"/>
</dbReference>
<dbReference type="InterPro" id="IPR002000">
    <property type="entry name" value="Lysosome-assoc_membr_glycop"/>
</dbReference>
<dbReference type="PANTHER" id="PTHR11506">
    <property type="entry name" value="LYSOSOME-ASSOCIATED MEMBRANE GLYCOPROTEIN"/>
    <property type="match status" value="1"/>
</dbReference>
<dbReference type="PANTHER" id="PTHR11506:SF30">
    <property type="entry name" value="LYSOSOME-ASSOCIATED MEMBRANE GLYCOPROTEIN 3"/>
    <property type="match status" value="1"/>
</dbReference>
<dbReference type="Pfam" id="PF01299">
    <property type="entry name" value="Lamp2-like_luminal"/>
    <property type="match status" value="1"/>
</dbReference>
<dbReference type="PRINTS" id="PR00336">
    <property type="entry name" value="LYSASSOCTDMP"/>
</dbReference>
<dbReference type="PROSITE" id="PS51407">
    <property type="entry name" value="LAMP_3"/>
    <property type="match status" value="1"/>
</dbReference>
<keyword id="KW-0002">3D-structure</keyword>
<keyword id="KW-1064">Adaptive immunity</keyword>
<keyword id="KW-0968">Cytoplasmic vesicle</keyword>
<keyword id="KW-1015">Disulfide bond</keyword>
<keyword id="KW-0967">Endosome</keyword>
<keyword id="KW-0325">Glycoprotein</keyword>
<keyword id="KW-0945">Host-virus interaction</keyword>
<keyword id="KW-0391">Immunity</keyword>
<keyword id="KW-0458">Lysosome</keyword>
<keyword id="KW-0472">Membrane</keyword>
<keyword id="KW-1267">Proteomics identification</keyword>
<keyword id="KW-1185">Reference proteome</keyword>
<keyword id="KW-0732">Signal</keyword>
<keyword id="KW-0812">Transmembrane</keyword>
<keyword id="KW-1133">Transmembrane helix</keyword>
<name>LAMP3_HUMAN</name>
<sequence length="416" mass="44346">MPRQLSAAAALFASLAVILHDGSQMRAKAFPETRDYSQPTAAATVQDIKKPVQQPAKQAPHQTLAARFMDGHITFQTAATVKIPTTTPATTKNTATTSPITYTLVTTQATPNNSHTAPPVTEVTVGPSLAPYSLPPTITPPAHTTGTSSSTVSHTTGNTTQPSNQTTLPATLSIALHKSTTGQKPVQPTHAPGTTAAAHNTTRTAAPASTVPGPTLAPQPSSVKTGIYQVLNGSRLCIKAEMGIQLIVQDKESVFSPRRYFNIDPNATQASGNCGTRKSNLLLNFQGGFVNLTFTKDEESYYISEVGAYLTVSDPETIYQGIKHAVVMFQTAVGHSFKCVSEQSLQLSAHLQVKTTDVQLQAFDFEDDHFGNVDECSSDYTIVLPVIGAIVVGLCLMGMGVYKIRLRCQSSGYQRI</sequence>
<proteinExistence type="evidence at protein level"/>
<feature type="signal peptide" evidence="1">
    <location>
        <begin position="1"/>
        <end position="27"/>
    </location>
</feature>
<feature type="chain" id="PRO_0000223695" description="Lysosome-associated membrane glycoprotein 3">
    <location>
        <begin position="28"/>
        <end position="416"/>
    </location>
</feature>
<feature type="topological domain" description="Lumenal" evidence="1">
    <location>
        <begin position="28"/>
        <end position="381"/>
    </location>
</feature>
<feature type="transmembrane region" description="Helical" evidence="2">
    <location>
        <begin position="382"/>
        <end position="402"/>
    </location>
</feature>
<feature type="topological domain" description="Cytoplasmic" evidence="2">
    <location>
        <begin position="403"/>
        <end position="416"/>
    </location>
</feature>
<feature type="region of interest" description="Disordered" evidence="3">
    <location>
        <begin position="136"/>
        <end position="167"/>
    </location>
</feature>
<feature type="region of interest" description="Disordered" evidence="3">
    <location>
        <begin position="179"/>
        <end position="219"/>
    </location>
</feature>
<feature type="compositionally biased region" description="Low complexity" evidence="3">
    <location>
        <begin position="143"/>
        <end position="160"/>
    </location>
</feature>
<feature type="compositionally biased region" description="Low complexity" evidence="3">
    <location>
        <begin position="188"/>
        <end position="208"/>
    </location>
</feature>
<feature type="glycosylation site" description="N-linked (GlcNAc...) asparagine" evidence="1">
    <location>
        <position position="112"/>
    </location>
</feature>
<feature type="glycosylation site" description="N-linked (GlcNAc...) asparagine" evidence="1">
    <location>
        <position position="158"/>
    </location>
</feature>
<feature type="glycosylation site" description="N-linked (GlcNAc...) asparagine" evidence="1">
    <location>
        <position position="164"/>
    </location>
</feature>
<feature type="glycosylation site" description="N-linked (GlcNAc...) asparagine" evidence="1">
    <location>
        <position position="200"/>
    </location>
</feature>
<feature type="glycosylation site" description="N-linked (GlcNAc...) asparagine" evidence="1">
    <location>
        <position position="232"/>
    </location>
</feature>
<feature type="glycosylation site" description="N-linked (GlcNAc...) asparagine" evidence="1">
    <location>
        <position position="266"/>
    </location>
</feature>
<feature type="glycosylation site" description="N-linked (GlcNAc...) asparagine" evidence="7">
    <location>
        <position position="291"/>
    </location>
</feature>
<feature type="disulfide bond" evidence="2 7">
    <location>
        <begin position="237"/>
        <end position="274"/>
    </location>
</feature>
<feature type="disulfide bond" evidence="2 7">
    <location>
        <begin position="339"/>
        <end position="376"/>
    </location>
</feature>
<feature type="sequence variant" id="VAR_030827" description="In dbSNP:rs17853113." evidence="4">
    <original>E</original>
    <variation>G</variation>
    <location>
        <position position="32"/>
    </location>
</feature>
<feature type="sequence variant" id="VAR_025343" description="In dbSNP:rs482912." evidence="13 15">
    <original>I</original>
    <variation>V</variation>
    <location>
        <position position="318"/>
    </location>
</feature>
<feature type="sequence conflict" description="In Ref. 1; BAA34533." evidence="16" ref="1">
    <original>T</original>
    <variation>A</variation>
    <location>
        <position position="145"/>
    </location>
</feature>
<feature type="sequence conflict" description="In Ref. 1; BAA34533." evidence="16" ref="1">
    <original>V</original>
    <variation>D</variation>
    <location>
        <position position="186"/>
    </location>
</feature>
<feature type="strand" evidence="17">
    <location>
        <begin position="226"/>
        <end position="232"/>
    </location>
</feature>
<feature type="strand" evidence="17">
    <location>
        <begin position="235"/>
        <end position="248"/>
    </location>
</feature>
<feature type="strand" evidence="17">
    <location>
        <begin position="251"/>
        <end position="253"/>
    </location>
</feature>
<feature type="strand" evidence="17">
    <location>
        <begin position="259"/>
        <end position="262"/>
    </location>
</feature>
<feature type="helix" evidence="17">
    <location>
        <begin position="265"/>
        <end position="267"/>
    </location>
</feature>
<feature type="strand" evidence="17">
    <location>
        <begin position="269"/>
        <end position="273"/>
    </location>
</feature>
<feature type="strand" evidence="17">
    <location>
        <begin position="276"/>
        <end position="285"/>
    </location>
</feature>
<feature type="strand" evidence="17">
    <location>
        <begin position="288"/>
        <end position="296"/>
    </location>
</feature>
<feature type="strand" evidence="17">
    <location>
        <begin position="301"/>
        <end position="311"/>
    </location>
</feature>
<feature type="strand" evidence="17">
    <location>
        <begin position="313"/>
        <end position="315"/>
    </location>
</feature>
<feature type="strand" evidence="17">
    <location>
        <begin position="318"/>
        <end position="323"/>
    </location>
</feature>
<feature type="strand" evidence="17">
    <location>
        <begin position="328"/>
        <end position="331"/>
    </location>
</feature>
<feature type="strand" evidence="17">
    <location>
        <begin position="337"/>
        <end position="339"/>
    </location>
</feature>
<feature type="strand" evidence="17">
    <location>
        <begin position="343"/>
        <end position="346"/>
    </location>
</feature>
<feature type="strand" evidence="17">
    <location>
        <begin position="348"/>
        <end position="363"/>
    </location>
</feature>
<evidence type="ECO:0000255" key="1"/>
<evidence type="ECO:0000255" key="2">
    <source>
        <dbReference type="PROSITE-ProRule" id="PRU00740"/>
    </source>
</evidence>
<evidence type="ECO:0000256" key="3">
    <source>
        <dbReference type="SAM" id="MobiDB-lite"/>
    </source>
</evidence>
<evidence type="ECO:0000269" key="4">
    <source>
    </source>
</evidence>
<evidence type="ECO:0000269" key="5">
    <source>
    </source>
</evidence>
<evidence type="ECO:0000269" key="6">
    <source>
    </source>
</evidence>
<evidence type="ECO:0000269" key="7">
    <source>
    </source>
</evidence>
<evidence type="ECO:0000269" key="8">
    <source>
    </source>
</evidence>
<evidence type="ECO:0000269" key="9">
    <source>
    </source>
</evidence>
<evidence type="ECO:0000269" key="10">
    <source>
    </source>
</evidence>
<evidence type="ECO:0000269" key="11">
    <source>
    </source>
</evidence>
<evidence type="ECO:0000269" key="12">
    <source>
    </source>
</evidence>
<evidence type="ECO:0000269" key="13">
    <source>
    </source>
</evidence>
<evidence type="ECO:0000269" key="14">
    <source>
    </source>
</evidence>
<evidence type="ECO:0000269" key="15">
    <source ref="3"/>
</evidence>
<evidence type="ECO:0000305" key="16"/>
<evidence type="ECO:0007829" key="17">
    <source>
        <dbReference type="PDB" id="4AKM"/>
    </source>
</evidence>
<accession>Q9UQV4</accession>
<accession>D3DNS4</accession>
<accession>O94781</accession>
<accession>Q8NEC8</accession>
<protein>
    <recommendedName>
        <fullName>Lysosome-associated membrane glycoprotein 3</fullName>
        <shortName>LAMP-3</shortName>
        <shortName>Lysosomal-associated membrane protein 3</shortName>
    </recommendedName>
    <alternativeName>
        <fullName>DC-lysosome-associated membrane glycoprotein</fullName>
        <shortName>DC LAMP</shortName>
    </alternativeName>
    <alternativeName>
        <fullName>Protein TSC403</fullName>
    </alternativeName>
    <cdAntigenName>CD208</cdAntigenName>
</protein>